<accession>B7GKZ7</accession>
<protein>
    <recommendedName>
        <fullName evidence="1">Flagellar assembly factor FliW</fullName>
    </recommendedName>
</protein>
<comment type="function">
    <text evidence="1">Acts as an anti-CsrA protein, binds CsrA and prevents it from repressing translation of its target genes, one of which is flagellin. Binds to flagellin and participates in the assembly of the flagellum.</text>
</comment>
<comment type="subunit">
    <text evidence="1">Interacts with translational regulator CsrA and flagellin(s).</text>
</comment>
<comment type="subcellular location">
    <subcellularLocation>
        <location evidence="1">Cytoplasm</location>
    </subcellularLocation>
</comment>
<comment type="similarity">
    <text evidence="1">Belongs to the FliW family.</text>
</comment>
<evidence type="ECO:0000255" key="1">
    <source>
        <dbReference type="HAMAP-Rule" id="MF_01185"/>
    </source>
</evidence>
<reference key="1">
    <citation type="journal article" date="2008" name="Genome Biol.">
        <title>Encapsulated in silica: genome, proteome and physiology of the thermophilic bacterium Anoxybacillus flavithermus WK1.</title>
        <authorList>
            <person name="Saw J.H."/>
            <person name="Mountain B.W."/>
            <person name="Feng L."/>
            <person name="Omelchenko M.V."/>
            <person name="Hou S."/>
            <person name="Saito J.A."/>
            <person name="Stott M.B."/>
            <person name="Li D."/>
            <person name="Zhao G."/>
            <person name="Wu J."/>
            <person name="Galperin M.Y."/>
            <person name="Koonin E.V."/>
            <person name="Makarova K.S."/>
            <person name="Wolf Y.I."/>
            <person name="Rigden D.J."/>
            <person name="Dunfield P.F."/>
            <person name="Wang L."/>
            <person name="Alam M."/>
        </authorList>
    </citation>
    <scope>NUCLEOTIDE SEQUENCE [LARGE SCALE GENOMIC DNA]</scope>
    <source>
        <strain>DSM 21510 / WK1</strain>
    </source>
</reference>
<proteinExistence type="inferred from homology"/>
<gene>
    <name evidence="1" type="primary">fliW</name>
    <name type="ordered locus">Aflv_2581</name>
</gene>
<feature type="chain" id="PRO_1000138248" description="Flagellar assembly factor FliW">
    <location>
        <begin position="1"/>
        <end position="145"/>
    </location>
</feature>
<organism>
    <name type="scientific">Anoxybacillus flavithermus (strain DSM 21510 / WK1)</name>
    <dbReference type="NCBI Taxonomy" id="491915"/>
    <lineage>
        <taxon>Bacteria</taxon>
        <taxon>Bacillati</taxon>
        <taxon>Bacillota</taxon>
        <taxon>Bacilli</taxon>
        <taxon>Bacillales</taxon>
        <taxon>Anoxybacillaceae</taxon>
        <taxon>Anoxybacillus</taxon>
    </lineage>
</organism>
<sequence>MNIETKYHGTVQLSQLALVSFENGLPGFEHEKQFALLPIHDSPFTILQSIQHKDVAFVMIEPFSYFPTYEIELDDATCEQLKIQKENDVALYVILTVAEPFTNTTANLQAPVVINVHERIGKQVILTNTPYKTKHRLFPETVEAK</sequence>
<dbReference type="EMBL" id="CP000922">
    <property type="protein sequence ID" value="ACJ34934.1"/>
    <property type="molecule type" value="Genomic_DNA"/>
</dbReference>
<dbReference type="RefSeq" id="WP_012576071.1">
    <property type="nucleotide sequence ID" value="NC_011567.1"/>
</dbReference>
<dbReference type="SMR" id="B7GKZ7"/>
<dbReference type="STRING" id="491915.Aflv_2581"/>
<dbReference type="GeneID" id="7038854"/>
<dbReference type="KEGG" id="afl:Aflv_2581"/>
<dbReference type="PATRIC" id="fig|491915.6.peg.2661"/>
<dbReference type="eggNOG" id="COG1699">
    <property type="taxonomic scope" value="Bacteria"/>
</dbReference>
<dbReference type="HOGENOM" id="CLU_112356_0_2_9"/>
<dbReference type="Proteomes" id="UP000000742">
    <property type="component" value="Chromosome"/>
</dbReference>
<dbReference type="GO" id="GO:0005737">
    <property type="term" value="C:cytoplasm"/>
    <property type="evidence" value="ECO:0007669"/>
    <property type="project" value="UniProtKB-SubCell"/>
</dbReference>
<dbReference type="GO" id="GO:0044780">
    <property type="term" value="P:bacterial-type flagellum assembly"/>
    <property type="evidence" value="ECO:0007669"/>
    <property type="project" value="UniProtKB-UniRule"/>
</dbReference>
<dbReference type="GO" id="GO:0006417">
    <property type="term" value="P:regulation of translation"/>
    <property type="evidence" value="ECO:0007669"/>
    <property type="project" value="UniProtKB-KW"/>
</dbReference>
<dbReference type="Gene3D" id="2.30.290.10">
    <property type="entry name" value="BH3618-like"/>
    <property type="match status" value="1"/>
</dbReference>
<dbReference type="HAMAP" id="MF_01185">
    <property type="entry name" value="FliW"/>
    <property type="match status" value="1"/>
</dbReference>
<dbReference type="InterPro" id="IPR003775">
    <property type="entry name" value="Flagellar_assembly_factor_FliW"/>
</dbReference>
<dbReference type="InterPro" id="IPR024046">
    <property type="entry name" value="Flagellar_assmbl_FliW_dom_sf"/>
</dbReference>
<dbReference type="NCBIfam" id="NF009793">
    <property type="entry name" value="PRK13285.1-1"/>
    <property type="match status" value="1"/>
</dbReference>
<dbReference type="PANTHER" id="PTHR39190">
    <property type="entry name" value="FLAGELLAR ASSEMBLY FACTOR FLIW"/>
    <property type="match status" value="1"/>
</dbReference>
<dbReference type="PANTHER" id="PTHR39190:SF1">
    <property type="entry name" value="FLAGELLAR ASSEMBLY FACTOR FLIW"/>
    <property type="match status" value="1"/>
</dbReference>
<dbReference type="Pfam" id="PF02623">
    <property type="entry name" value="FliW"/>
    <property type="match status" value="1"/>
</dbReference>
<dbReference type="SUPFAM" id="SSF141457">
    <property type="entry name" value="BH3618-like"/>
    <property type="match status" value="1"/>
</dbReference>
<keyword id="KW-1005">Bacterial flagellum biogenesis</keyword>
<keyword id="KW-0143">Chaperone</keyword>
<keyword id="KW-0963">Cytoplasm</keyword>
<keyword id="KW-0810">Translation regulation</keyword>
<name>FLIW_ANOFW</name>